<evidence type="ECO:0000250" key="1"/>
<evidence type="ECO:0000305" key="2"/>
<organism>
    <name type="scientific">Bacillus subtilis (strain 168)</name>
    <dbReference type="NCBI Taxonomy" id="224308"/>
    <lineage>
        <taxon>Bacteria</taxon>
        <taxon>Bacillati</taxon>
        <taxon>Bacillota</taxon>
        <taxon>Bacilli</taxon>
        <taxon>Bacillales</taxon>
        <taxon>Bacillaceae</taxon>
        <taxon>Bacillus</taxon>
    </lineage>
</organism>
<keyword id="KW-0963">Cytoplasm</keyword>
<keyword id="KW-0413">Isomerase</keyword>
<keyword id="KW-0627">Porphyrin biosynthesis</keyword>
<keyword id="KW-0663">Pyridoxal phosphate</keyword>
<keyword id="KW-1185">Reference proteome</keyword>
<name>GSAB_BACSU</name>
<proteinExistence type="inferred from homology"/>
<gene>
    <name type="primary">gsaB</name>
    <name type="ordered locus">BSU08710</name>
</gene>
<protein>
    <recommendedName>
        <fullName>Glutamate-1-semialdehyde 2,1-aminomutase 2</fullName>
        <shortName>GSA 2</shortName>
        <ecNumber>5.4.3.8</ecNumber>
    </recommendedName>
    <alternativeName>
        <fullName>Glutamate-1-semialdehyde aminotransferase 2</fullName>
        <shortName>GSA-AT 2</shortName>
    </alternativeName>
</protein>
<sequence length="429" mass="46184">MHTKSIELHNEALQHIVGGVNSPSRSYKAVGGGSPVAMEKASGAYFWDVDGNKYIDYLAAYGPIITGHAHPHITEAIKKAAENGVLYGTPTKHEVTFAKMLKEAIPAMDKVRFVNSGTEAVMTTIRVARAYTGRTKIIKFAGCYHGHSDLVLVAAGSGPSTLGTPDSAGVPKSIANEVITVPFNDIDSYKAALEKWGSEIAAVLVEPIVGNFGIVEPKEGFLEQVNELTHNAGALVIYDEVITAFRFMYGGAQDLLQVKPDLTALGKIIGGGLPIGAYGGKQEIMEQVAPLGPAYQAGTMAGNPASILSGIACLEVLKEKGVYEKLDHLGAMLEEGILKHAETHGITITVNRLKGALTVYFSDEKVENYEQAERSDGETFSTFFKLMLERGINLAPSKYEAWFITTAHTEQDIKDTLTAVEDAFKHLKN</sequence>
<dbReference type="EC" id="5.4.3.8"/>
<dbReference type="EMBL" id="Z82044">
    <property type="protein sequence ID" value="CAB04811.1"/>
    <property type="molecule type" value="Genomic_DNA"/>
</dbReference>
<dbReference type="EMBL" id="AL009126">
    <property type="protein sequence ID" value="CAB12699.3"/>
    <property type="molecule type" value="Genomic_DNA"/>
</dbReference>
<dbReference type="PIR" id="G69637">
    <property type="entry name" value="G69637"/>
</dbReference>
<dbReference type="RefSeq" id="NP_388751.3">
    <property type="nucleotide sequence ID" value="NC_000964.3"/>
</dbReference>
<dbReference type="RefSeq" id="WP_003233535.1">
    <property type="nucleotide sequence ID" value="NZ_OZ025638.1"/>
</dbReference>
<dbReference type="SMR" id="P71084"/>
<dbReference type="FunCoup" id="P71084">
    <property type="interactions" value="191"/>
</dbReference>
<dbReference type="STRING" id="224308.BSU08710"/>
<dbReference type="jPOST" id="P71084"/>
<dbReference type="PaxDb" id="224308-BSU08710"/>
<dbReference type="EnsemblBacteria" id="CAB12699">
    <property type="protein sequence ID" value="CAB12699"/>
    <property type="gene ID" value="BSU_08710"/>
</dbReference>
<dbReference type="GeneID" id="936194"/>
<dbReference type="KEGG" id="bsu:BSU08710"/>
<dbReference type="PATRIC" id="fig|224308.179.peg.939"/>
<dbReference type="eggNOG" id="COG0001">
    <property type="taxonomic scope" value="Bacteria"/>
</dbReference>
<dbReference type="InParanoid" id="P71084"/>
<dbReference type="OrthoDB" id="9807885at2"/>
<dbReference type="PhylomeDB" id="P71084"/>
<dbReference type="BioCyc" id="BSUB:BSU08710-MONOMER"/>
<dbReference type="UniPathway" id="UPA00251">
    <property type="reaction ID" value="UER00317"/>
</dbReference>
<dbReference type="Proteomes" id="UP000001570">
    <property type="component" value="Chromosome"/>
</dbReference>
<dbReference type="GO" id="GO:0005737">
    <property type="term" value="C:cytoplasm"/>
    <property type="evidence" value="ECO:0007669"/>
    <property type="project" value="UniProtKB-SubCell"/>
</dbReference>
<dbReference type="GO" id="GO:0042286">
    <property type="term" value="F:glutamate-1-semialdehyde 2,1-aminomutase activity"/>
    <property type="evidence" value="ECO:0007669"/>
    <property type="project" value="UniProtKB-UniRule"/>
</dbReference>
<dbReference type="GO" id="GO:0030170">
    <property type="term" value="F:pyridoxal phosphate binding"/>
    <property type="evidence" value="ECO:0007669"/>
    <property type="project" value="InterPro"/>
</dbReference>
<dbReference type="GO" id="GO:0008483">
    <property type="term" value="F:transaminase activity"/>
    <property type="evidence" value="ECO:0007669"/>
    <property type="project" value="InterPro"/>
</dbReference>
<dbReference type="GO" id="GO:0006782">
    <property type="term" value="P:protoporphyrinogen IX biosynthetic process"/>
    <property type="evidence" value="ECO:0007669"/>
    <property type="project" value="UniProtKB-UniRule"/>
</dbReference>
<dbReference type="CDD" id="cd00610">
    <property type="entry name" value="OAT_like"/>
    <property type="match status" value="1"/>
</dbReference>
<dbReference type="FunFam" id="3.40.640.10:FF:000021">
    <property type="entry name" value="Glutamate-1-semialdehyde 2,1-aminomutase"/>
    <property type="match status" value="1"/>
</dbReference>
<dbReference type="Gene3D" id="3.90.1150.10">
    <property type="entry name" value="Aspartate Aminotransferase, domain 1"/>
    <property type="match status" value="1"/>
</dbReference>
<dbReference type="Gene3D" id="3.40.640.10">
    <property type="entry name" value="Type I PLP-dependent aspartate aminotransferase-like (Major domain)"/>
    <property type="match status" value="1"/>
</dbReference>
<dbReference type="HAMAP" id="MF_00375">
    <property type="entry name" value="HemL_aminotrans_3"/>
    <property type="match status" value="1"/>
</dbReference>
<dbReference type="InterPro" id="IPR004639">
    <property type="entry name" value="4pyrrol_synth_GluAld_NH2Trfase"/>
</dbReference>
<dbReference type="InterPro" id="IPR005814">
    <property type="entry name" value="Aminotrans_3"/>
</dbReference>
<dbReference type="InterPro" id="IPR049704">
    <property type="entry name" value="Aminotrans_3_PPA_site"/>
</dbReference>
<dbReference type="InterPro" id="IPR015424">
    <property type="entry name" value="PyrdxlP-dep_Trfase"/>
</dbReference>
<dbReference type="InterPro" id="IPR015421">
    <property type="entry name" value="PyrdxlP-dep_Trfase_major"/>
</dbReference>
<dbReference type="InterPro" id="IPR015422">
    <property type="entry name" value="PyrdxlP-dep_Trfase_small"/>
</dbReference>
<dbReference type="NCBIfam" id="TIGR00713">
    <property type="entry name" value="hemL"/>
    <property type="match status" value="1"/>
</dbReference>
<dbReference type="NCBIfam" id="NF000818">
    <property type="entry name" value="PRK00062.1"/>
    <property type="match status" value="1"/>
</dbReference>
<dbReference type="NCBIfam" id="NF009055">
    <property type="entry name" value="PRK12389.1"/>
    <property type="match status" value="1"/>
</dbReference>
<dbReference type="PANTHER" id="PTHR43713">
    <property type="entry name" value="GLUTAMATE-1-SEMIALDEHYDE 2,1-AMINOMUTASE"/>
    <property type="match status" value="1"/>
</dbReference>
<dbReference type="PANTHER" id="PTHR43713:SF1">
    <property type="entry name" value="GLUTAMATE-1-SEMIALDEHYDE 2,1-AMINOMUTASE 2"/>
    <property type="match status" value="1"/>
</dbReference>
<dbReference type="Pfam" id="PF00202">
    <property type="entry name" value="Aminotran_3"/>
    <property type="match status" value="1"/>
</dbReference>
<dbReference type="SUPFAM" id="SSF53383">
    <property type="entry name" value="PLP-dependent transferases"/>
    <property type="match status" value="1"/>
</dbReference>
<dbReference type="PROSITE" id="PS00600">
    <property type="entry name" value="AA_TRANSFER_CLASS_3"/>
    <property type="match status" value="1"/>
</dbReference>
<reference key="1">
    <citation type="journal article" date="1997" name="Microbiology">
        <title>The Bacillus subtilis 168 chromosome from sspE to katA.</title>
        <authorList>
            <person name="Cummings N.J."/>
            <person name="Connerton I.F."/>
        </authorList>
    </citation>
    <scope>NUCLEOTIDE SEQUENCE [GENOMIC DNA]</scope>
    <source>
        <strain>168</strain>
    </source>
</reference>
<reference key="2">
    <citation type="journal article" date="1997" name="Nature">
        <title>The complete genome sequence of the Gram-positive bacterium Bacillus subtilis.</title>
        <authorList>
            <person name="Kunst F."/>
            <person name="Ogasawara N."/>
            <person name="Moszer I."/>
            <person name="Albertini A.M."/>
            <person name="Alloni G."/>
            <person name="Azevedo V."/>
            <person name="Bertero M.G."/>
            <person name="Bessieres P."/>
            <person name="Bolotin A."/>
            <person name="Borchert S."/>
            <person name="Borriss R."/>
            <person name="Boursier L."/>
            <person name="Brans A."/>
            <person name="Braun M."/>
            <person name="Brignell S.C."/>
            <person name="Bron S."/>
            <person name="Brouillet S."/>
            <person name="Bruschi C.V."/>
            <person name="Caldwell B."/>
            <person name="Capuano V."/>
            <person name="Carter N.M."/>
            <person name="Choi S.-K."/>
            <person name="Codani J.-J."/>
            <person name="Connerton I.F."/>
            <person name="Cummings N.J."/>
            <person name="Daniel R.A."/>
            <person name="Denizot F."/>
            <person name="Devine K.M."/>
            <person name="Duesterhoeft A."/>
            <person name="Ehrlich S.D."/>
            <person name="Emmerson P.T."/>
            <person name="Entian K.-D."/>
            <person name="Errington J."/>
            <person name="Fabret C."/>
            <person name="Ferrari E."/>
            <person name="Foulger D."/>
            <person name="Fritz C."/>
            <person name="Fujita M."/>
            <person name="Fujita Y."/>
            <person name="Fuma S."/>
            <person name="Galizzi A."/>
            <person name="Galleron N."/>
            <person name="Ghim S.-Y."/>
            <person name="Glaser P."/>
            <person name="Goffeau A."/>
            <person name="Golightly E.J."/>
            <person name="Grandi G."/>
            <person name="Guiseppi G."/>
            <person name="Guy B.J."/>
            <person name="Haga K."/>
            <person name="Haiech J."/>
            <person name="Harwood C.R."/>
            <person name="Henaut A."/>
            <person name="Hilbert H."/>
            <person name="Holsappel S."/>
            <person name="Hosono S."/>
            <person name="Hullo M.-F."/>
            <person name="Itaya M."/>
            <person name="Jones L.-M."/>
            <person name="Joris B."/>
            <person name="Karamata D."/>
            <person name="Kasahara Y."/>
            <person name="Klaerr-Blanchard M."/>
            <person name="Klein C."/>
            <person name="Kobayashi Y."/>
            <person name="Koetter P."/>
            <person name="Koningstein G."/>
            <person name="Krogh S."/>
            <person name="Kumano M."/>
            <person name="Kurita K."/>
            <person name="Lapidus A."/>
            <person name="Lardinois S."/>
            <person name="Lauber J."/>
            <person name="Lazarevic V."/>
            <person name="Lee S.-M."/>
            <person name="Levine A."/>
            <person name="Liu H."/>
            <person name="Masuda S."/>
            <person name="Mauel C."/>
            <person name="Medigue C."/>
            <person name="Medina N."/>
            <person name="Mellado R.P."/>
            <person name="Mizuno M."/>
            <person name="Moestl D."/>
            <person name="Nakai S."/>
            <person name="Noback M."/>
            <person name="Noone D."/>
            <person name="O'Reilly M."/>
            <person name="Ogawa K."/>
            <person name="Ogiwara A."/>
            <person name="Oudega B."/>
            <person name="Park S.-H."/>
            <person name="Parro V."/>
            <person name="Pohl T.M."/>
            <person name="Portetelle D."/>
            <person name="Porwollik S."/>
            <person name="Prescott A.M."/>
            <person name="Presecan E."/>
            <person name="Pujic P."/>
            <person name="Purnelle B."/>
            <person name="Rapoport G."/>
            <person name="Rey M."/>
            <person name="Reynolds S."/>
            <person name="Rieger M."/>
            <person name="Rivolta C."/>
            <person name="Rocha E."/>
            <person name="Roche B."/>
            <person name="Rose M."/>
            <person name="Sadaie Y."/>
            <person name="Sato T."/>
            <person name="Scanlan E."/>
            <person name="Schleich S."/>
            <person name="Schroeter R."/>
            <person name="Scoffone F."/>
            <person name="Sekiguchi J."/>
            <person name="Sekowska A."/>
            <person name="Seror S.J."/>
            <person name="Serror P."/>
            <person name="Shin B.-S."/>
            <person name="Soldo B."/>
            <person name="Sorokin A."/>
            <person name="Tacconi E."/>
            <person name="Takagi T."/>
            <person name="Takahashi H."/>
            <person name="Takemaru K."/>
            <person name="Takeuchi M."/>
            <person name="Tamakoshi A."/>
            <person name="Tanaka T."/>
            <person name="Terpstra P."/>
            <person name="Tognoni A."/>
            <person name="Tosato V."/>
            <person name="Uchiyama S."/>
            <person name="Vandenbol M."/>
            <person name="Vannier F."/>
            <person name="Vassarotti A."/>
            <person name="Viari A."/>
            <person name="Wambutt R."/>
            <person name="Wedler E."/>
            <person name="Wedler H."/>
            <person name="Weitzenegger T."/>
            <person name="Winters P."/>
            <person name="Wipat A."/>
            <person name="Yamamoto H."/>
            <person name="Yamane K."/>
            <person name="Yasumoto K."/>
            <person name="Yata K."/>
            <person name="Yoshida K."/>
            <person name="Yoshikawa H.-F."/>
            <person name="Zumstein E."/>
            <person name="Yoshikawa H."/>
            <person name="Danchin A."/>
        </authorList>
    </citation>
    <scope>NUCLEOTIDE SEQUENCE [LARGE SCALE GENOMIC DNA]</scope>
    <source>
        <strain>168</strain>
    </source>
</reference>
<reference key="3">
    <citation type="journal article" date="2009" name="Microbiology">
        <title>From a consortium sequence to a unified sequence: the Bacillus subtilis 168 reference genome a decade later.</title>
        <authorList>
            <person name="Barbe V."/>
            <person name="Cruveiller S."/>
            <person name="Kunst F."/>
            <person name="Lenoble P."/>
            <person name="Meurice G."/>
            <person name="Sekowska A."/>
            <person name="Vallenet D."/>
            <person name="Wang T."/>
            <person name="Moszer I."/>
            <person name="Medigue C."/>
            <person name="Danchin A."/>
        </authorList>
    </citation>
    <scope>SEQUENCE REVISION TO 338</scope>
</reference>
<comment type="catalytic activity">
    <reaction>
        <text>(S)-4-amino-5-oxopentanoate = 5-aminolevulinate</text>
        <dbReference type="Rhea" id="RHEA:14265"/>
        <dbReference type="ChEBI" id="CHEBI:57501"/>
        <dbReference type="ChEBI" id="CHEBI:356416"/>
        <dbReference type="EC" id="5.4.3.8"/>
    </reaction>
</comment>
<comment type="cofactor">
    <cofactor evidence="1">
        <name>pyridoxal 5'-phosphate</name>
        <dbReference type="ChEBI" id="CHEBI:597326"/>
    </cofactor>
</comment>
<comment type="pathway">
    <text>Porphyrin-containing compound metabolism; protoporphyrin-IX biosynthesis; 5-aminolevulinate from L-glutamyl-tRNA(Glu): step 2/2.</text>
</comment>
<comment type="subunit">
    <text evidence="1">Homodimer.</text>
</comment>
<comment type="subcellular location">
    <subcellularLocation>
        <location evidence="2">Cytoplasm</location>
    </subcellularLocation>
</comment>
<comment type="similarity">
    <text evidence="2">Belongs to the class-III pyridoxal-phosphate-dependent aminotransferase family. HemL subfamily.</text>
</comment>
<accession>P71084</accession>
<feature type="chain" id="PRO_0000120395" description="Glutamate-1-semialdehyde 2,1-aminomutase 2">
    <location>
        <begin position="1"/>
        <end position="429"/>
    </location>
</feature>
<feature type="modified residue" description="N6-(pyridoxal phosphate)lysine" evidence="1">
    <location>
        <position position="267"/>
    </location>
</feature>
<feature type="sequence conflict" description="In Ref. 1; CAB04811." evidence="2" ref="1">
    <original>L</original>
    <variation>M</variation>
    <location>
        <position position="338"/>
    </location>
</feature>